<gene>
    <name evidence="1" type="primary">leuD</name>
    <name type="ordered locus">Sama_0338</name>
</gene>
<protein>
    <recommendedName>
        <fullName evidence="1">3-isopropylmalate dehydratase small subunit</fullName>
        <ecNumber evidence="1">4.2.1.33</ecNumber>
    </recommendedName>
    <alternativeName>
        <fullName evidence="1">Alpha-IPM isomerase</fullName>
        <shortName evidence="1">IPMI</shortName>
    </alternativeName>
    <alternativeName>
        <fullName evidence="1">Isopropylmalate isomerase</fullName>
    </alternativeName>
</protein>
<sequence length="201" mass="22039">MQAFTTHTGLAVAIDSANIDTDQIIPKQFLSKVTKDGFGIHLFHDWRYLDDAGDIPNPEFNLNKPRYKGATILLAQENFGCGSSREHAPWALADFGLRAIIAPTFADIFYGNAINNGLLPVRLPEAAVRQLMDEVEANEGAEVTVDLENLKVVSPSGAEFSFTLAESARQNLLKGLDAIGLTLAHEAAISEYESRIPAWRR</sequence>
<feature type="chain" id="PRO_1000063830" description="3-isopropylmalate dehydratase small subunit">
    <location>
        <begin position="1"/>
        <end position="201"/>
    </location>
</feature>
<organism>
    <name type="scientific">Shewanella amazonensis (strain ATCC BAA-1098 / SB2B)</name>
    <dbReference type="NCBI Taxonomy" id="326297"/>
    <lineage>
        <taxon>Bacteria</taxon>
        <taxon>Pseudomonadati</taxon>
        <taxon>Pseudomonadota</taxon>
        <taxon>Gammaproteobacteria</taxon>
        <taxon>Alteromonadales</taxon>
        <taxon>Shewanellaceae</taxon>
        <taxon>Shewanella</taxon>
    </lineage>
</organism>
<comment type="function">
    <text evidence="1">Catalyzes the isomerization between 2-isopropylmalate and 3-isopropylmalate, via the formation of 2-isopropylmaleate.</text>
</comment>
<comment type="catalytic activity">
    <reaction evidence="1">
        <text>(2R,3S)-3-isopropylmalate = (2S)-2-isopropylmalate</text>
        <dbReference type="Rhea" id="RHEA:32287"/>
        <dbReference type="ChEBI" id="CHEBI:1178"/>
        <dbReference type="ChEBI" id="CHEBI:35121"/>
        <dbReference type="EC" id="4.2.1.33"/>
    </reaction>
</comment>
<comment type="pathway">
    <text evidence="1">Amino-acid biosynthesis; L-leucine biosynthesis; L-leucine from 3-methyl-2-oxobutanoate: step 2/4.</text>
</comment>
<comment type="subunit">
    <text evidence="1">Heterodimer of LeuC and LeuD.</text>
</comment>
<comment type="similarity">
    <text evidence="1">Belongs to the LeuD family. LeuD type 1 subfamily.</text>
</comment>
<accession>A1S2E3</accession>
<evidence type="ECO:0000255" key="1">
    <source>
        <dbReference type="HAMAP-Rule" id="MF_01031"/>
    </source>
</evidence>
<dbReference type="EC" id="4.2.1.33" evidence="1"/>
<dbReference type="EMBL" id="CP000507">
    <property type="protein sequence ID" value="ABL98549.1"/>
    <property type="molecule type" value="Genomic_DNA"/>
</dbReference>
<dbReference type="RefSeq" id="WP_011758459.1">
    <property type="nucleotide sequence ID" value="NC_008700.1"/>
</dbReference>
<dbReference type="SMR" id="A1S2E3"/>
<dbReference type="STRING" id="326297.Sama_0338"/>
<dbReference type="KEGG" id="saz:Sama_0338"/>
<dbReference type="eggNOG" id="COG0066">
    <property type="taxonomic scope" value="Bacteria"/>
</dbReference>
<dbReference type="HOGENOM" id="CLU_081378_0_3_6"/>
<dbReference type="OrthoDB" id="9777465at2"/>
<dbReference type="UniPathway" id="UPA00048">
    <property type="reaction ID" value="UER00071"/>
</dbReference>
<dbReference type="Proteomes" id="UP000009175">
    <property type="component" value="Chromosome"/>
</dbReference>
<dbReference type="GO" id="GO:0009316">
    <property type="term" value="C:3-isopropylmalate dehydratase complex"/>
    <property type="evidence" value="ECO:0007669"/>
    <property type="project" value="InterPro"/>
</dbReference>
<dbReference type="GO" id="GO:0003861">
    <property type="term" value="F:3-isopropylmalate dehydratase activity"/>
    <property type="evidence" value="ECO:0007669"/>
    <property type="project" value="UniProtKB-UniRule"/>
</dbReference>
<dbReference type="GO" id="GO:0009098">
    <property type="term" value="P:L-leucine biosynthetic process"/>
    <property type="evidence" value="ECO:0007669"/>
    <property type="project" value="UniProtKB-UniRule"/>
</dbReference>
<dbReference type="CDD" id="cd01577">
    <property type="entry name" value="IPMI_Swivel"/>
    <property type="match status" value="1"/>
</dbReference>
<dbReference type="FunFam" id="3.20.19.10:FF:000003">
    <property type="entry name" value="3-isopropylmalate dehydratase small subunit"/>
    <property type="match status" value="1"/>
</dbReference>
<dbReference type="Gene3D" id="3.20.19.10">
    <property type="entry name" value="Aconitase, domain 4"/>
    <property type="match status" value="1"/>
</dbReference>
<dbReference type="HAMAP" id="MF_01031">
    <property type="entry name" value="LeuD_type1"/>
    <property type="match status" value="1"/>
</dbReference>
<dbReference type="InterPro" id="IPR004431">
    <property type="entry name" value="3-IsopropMal_deHydase_ssu"/>
</dbReference>
<dbReference type="InterPro" id="IPR015928">
    <property type="entry name" value="Aconitase/3IPM_dehydase_swvl"/>
</dbReference>
<dbReference type="InterPro" id="IPR000573">
    <property type="entry name" value="AconitaseA/IPMdHydase_ssu_swvl"/>
</dbReference>
<dbReference type="InterPro" id="IPR033940">
    <property type="entry name" value="IPMI_Swivel"/>
</dbReference>
<dbReference type="InterPro" id="IPR050075">
    <property type="entry name" value="LeuD"/>
</dbReference>
<dbReference type="NCBIfam" id="TIGR00171">
    <property type="entry name" value="leuD"/>
    <property type="match status" value="1"/>
</dbReference>
<dbReference type="NCBIfam" id="NF002458">
    <property type="entry name" value="PRK01641.1"/>
    <property type="match status" value="1"/>
</dbReference>
<dbReference type="PANTHER" id="PTHR43345:SF5">
    <property type="entry name" value="3-ISOPROPYLMALATE DEHYDRATASE SMALL SUBUNIT"/>
    <property type="match status" value="1"/>
</dbReference>
<dbReference type="PANTHER" id="PTHR43345">
    <property type="entry name" value="3-ISOPROPYLMALATE DEHYDRATASE SMALL SUBUNIT 2-RELATED-RELATED"/>
    <property type="match status" value="1"/>
</dbReference>
<dbReference type="Pfam" id="PF00694">
    <property type="entry name" value="Aconitase_C"/>
    <property type="match status" value="1"/>
</dbReference>
<dbReference type="SUPFAM" id="SSF52016">
    <property type="entry name" value="LeuD/IlvD-like"/>
    <property type="match status" value="1"/>
</dbReference>
<proteinExistence type="inferred from homology"/>
<keyword id="KW-0028">Amino-acid biosynthesis</keyword>
<keyword id="KW-0100">Branched-chain amino acid biosynthesis</keyword>
<keyword id="KW-0432">Leucine biosynthesis</keyword>
<keyword id="KW-0456">Lyase</keyword>
<keyword id="KW-1185">Reference proteome</keyword>
<reference key="1">
    <citation type="submission" date="2006-12" db="EMBL/GenBank/DDBJ databases">
        <title>Complete sequence of Shewanella amazonensis SB2B.</title>
        <authorList>
            <consortium name="US DOE Joint Genome Institute"/>
            <person name="Copeland A."/>
            <person name="Lucas S."/>
            <person name="Lapidus A."/>
            <person name="Barry K."/>
            <person name="Detter J.C."/>
            <person name="Glavina del Rio T."/>
            <person name="Hammon N."/>
            <person name="Israni S."/>
            <person name="Dalin E."/>
            <person name="Tice H."/>
            <person name="Pitluck S."/>
            <person name="Munk A.C."/>
            <person name="Brettin T."/>
            <person name="Bruce D."/>
            <person name="Han C."/>
            <person name="Tapia R."/>
            <person name="Gilna P."/>
            <person name="Schmutz J."/>
            <person name="Larimer F."/>
            <person name="Land M."/>
            <person name="Hauser L."/>
            <person name="Kyrpides N."/>
            <person name="Mikhailova N."/>
            <person name="Fredrickson J."/>
            <person name="Richardson P."/>
        </authorList>
    </citation>
    <scope>NUCLEOTIDE SEQUENCE [LARGE SCALE GENOMIC DNA]</scope>
    <source>
        <strain>ATCC BAA-1098 / SB2B</strain>
    </source>
</reference>
<name>LEUD_SHEAM</name>